<protein>
    <recommendedName>
        <fullName>Interleukin-1 receptor antagonist protein</fullName>
        <shortName>IL-1RN</shortName>
        <shortName>IL-1ra</shortName>
        <shortName>IRAP</shortName>
    </recommendedName>
    <alternativeName>
        <fullName>IL1 inhibitor</fullName>
    </alternativeName>
</protein>
<proteinExistence type="evidence at transcript level"/>
<evidence type="ECO:0000250" key="1"/>
<evidence type="ECO:0000250" key="2">
    <source>
        <dbReference type="UniProtKB" id="P18510"/>
    </source>
</evidence>
<evidence type="ECO:0000250" key="3">
    <source>
        <dbReference type="UniProtKB" id="P25085"/>
    </source>
</evidence>
<evidence type="ECO:0000255" key="4"/>
<evidence type="ECO:0000305" key="5"/>
<reference key="1">
    <citation type="journal article" date="1997" name="Vet. Immunol. Immunopathol.">
        <title>Molecular cloning and functional expression of equine interleukin-1 receptor antagonist.</title>
        <authorList>
            <person name="Kato H."/>
            <person name="Ohashi T."/>
            <person name="Matsushiro H."/>
            <person name="Watari T."/>
            <person name="Goitsuka R."/>
            <person name="Tsujimoto H."/>
            <person name="Hasegawa A."/>
        </authorList>
    </citation>
    <scope>NUCLEOTIDE SEQUENCE [MRNA]</scope>
</reference>
<reference key="2">
    <citation type="journal article" date="1998" name="Am. J. Vet. Res.">
        <title>Cloning of equine interleukin-1 receptor antagonist and determination of its full-length cDNA sequence.</title>
        <authorList>
            <person name="Howard R.D."/>
            <person name="McIlwraith C.W."/>
            <person name="Trotter G.W."/>
            <person name="Nyborg J.K."/>
        </authorList>
    </citation>
    <scope>NUCLEOTIDE SEQUENCE [MRNA]</scope>
</reference>
<reference key="3">
    <citation type="submission" date="1998-08" db="EMBL/GenBank/DDBJ databases">
        <title>Molecular characterization of equine interleukin 1 receptor antagonist (IL-1ra) gene.</title>
        <authorList>
            <person name="Dhar A.K."/>
            <person name="Thompson M.S."/>
            <person name="Paradis M.R."/>
            <person name="Alcivar-Warren A."/>
        </authorList>
    </citation>
    <scope>NUCLEOTIDE SEQUENCE [MRNA] OF 1-119</scope>
</reference>
<accession>O18999</accession>
<accession>O77745</accession>
<accession>Q9TSJ0</accession>
<comment type="function">
    <text evidence="3">Anti-inflammatory antagonist of interleukin-1 family of proinflammatory cytokines such as interleukin-1beta/IL1B and interleukin-1alpha/IL1A. Protects from immune dysregulation and uncontrolled systemic inflammation triggered by IL1 for a range of innate stimulatory agents such as pathogens.</text>
</comment>
<comment type="subcellular location">
    <subcellularLocation>
        <location evidence="2">Secreted</location>
    </subcellularLocation>
</comment>
<comment type="similarity">
    <text evidence="5">Belongs to the IL-1 family.</text>
</comment>
<keyword id="KW-1015">Disulfide bond</keyword>
<keyword id="KW-0325">Glycoprotein</keyword>
<keyword id="KW-1185">Reference proteome</keyword>
<keyword id="KW-0964">Secreted</keyword>
<keyword id="KW-0732">Signal</keyword>
<sequence>MEIRRRSVRHLISLLLFLFYSETACHPLGKRPCKMQAFRIWDVNQKTFYMRNNQLVAGYLQESNTKLQEKIDVVPIEPDALFLGLHGRKLCLACVKSGDEIRFQLEAVNITDLSKNKEENKRFTFIRSNSGPTTSFESAACPGWFLCTAQEADRPVSLTNKPKESFMVTKFYLQEDQ</sequence>
<gene>
    <name type="primary">IL1RN</name>
    <name type="synonym">IL1RA</name>
</gene>
<name>IL1RA_HORSE</name>
<dbReference type="EMBL" id="D83714">
    <property type="protein sequence ID" value="BAA22529.1"/>
    <property type="molecule type" value="mRNA"/>
</dbReference>
<dbReference type="EMBL" id="U92482">
    <property type="protein sequence ID" value="AAC39257.1"/>
    <property type="molecule type" value="mRNA"/>
</dbReference>
<dbReference type="EMBL" id="AF088186">
    <property type="protein sequence ID" value="AAD04132.1"/>
    <property type="molecule type" value="mRNA"/>
</dbReference>
<dbReference type="RefSeq" id="NP_001075994.1">
    <property type="nucleotide sequence ID" value="NM_001082525.2"/>
</dbReference>
<dbReference type="SMR" id="O18999"/>
<dbReference type="FunCoup" id="O18999">
    <property type="interactions" value="40"/>
</dbReference>
<dbReference type="STRING" id="9796.ENSECAP00000052943"/>
<dbReference type="GlyCosmos" id="O18999">
    <property type="glycosylation" value="1 site, No reported glycans"/>
</dbReference>
<dbReference type="PaxDb" id="9796-ENSECAP00000052943"/>
<dbReference type="GeneID" id="100034236"/>
<dbReference type="KEGG" id="ecb:100034236"/>
<dbReference type="CTD" id="3557"/>
<dbReference type="HOGENOM" id="CLU_095373_2_0_1"/>
<dbReference type="InParanoid" id="O18999"/>
<dbReference type="OMA" id="WYLCTAL"/>
<dbReference type="OrthoDB" id="9274793at2759"/>
<dbReference type="TreeFam" id="TF300203"/>
<dbReference type="Proteomes" id="UP000002281">
    <property type="component" value="Chromosome 15"/>
</dbReference>
<dbReference type="Bgee" id="ENSECAG00000027864">
    <property type="expression patterns" value="Expressed in blood and 18 other cell types or tissues"/>
</dbReference>
<dbReference type="ExpressionAtlas" id="O18999">
    <property type="expression patterns" value="baseline"/>
</dbReference>
<dbReference type="GO" id="GO:0005615">
    <property type="term" value="C:extracellular space"/>
    <property type="evidence" value="ECO:0000318"/>
    <property type="project" value="GO_Central"/>
</dbReference>
<dbReference type="GO" id="GO:0005125">
    <property type="term" value="F:cytokine activity"/>
    <property type="evidence" value="ECO:0007669"/>
    <property type="project" value="InterPro"/>
</dbReference>
<dbReference type="GO" id="GO:0005152">
    <property type="term" value="F:interleukin-1 receptor antagonist activity"/>
    <property type="evidence" value="ECO:0000318"/>
    <property type="project" value="GO_Central"/>
</dbReference>
<dbReference type="GO" id="GO:0005149">
    <property type="term" value="F:interleukin-1 receptor binding"/>
    <property type="evidence" value="ECO:0007669"/>
    <property type="project" value="InterPro"/>
</dbReference>
<dbReference type="GO" id="GO:0006955">
    <property type="term" value="P:immune response"/>
    <property type="evidence" value="ECO:0000318"/>
    <property type="project" value="GO_Central"/>
</dbReference>
<dbReference type="GO" id="GO:0006954">
    <property type="term" value="P:inflammatory response"/>
    <property type="evidence" value="ECO:0000318"/>
    <property type="project" value="GO_Central"/>
</dbReference>
<dbReference type="GO" id="GO:2000660">
    <property type="term" value="P:negative regulation of interleukin-1-mediated signaling pathway"/>
    <property type="evidence" value="ECO:0000318"/>
    <property type="project" value="GO_Central"/>
</dbReference>
<dbReference type="FunFam" id="2.80.10.50:FF:000013">
    <property type="entry name" value="Interleukin-1"/>
    <property type="match status" value="1"/>
</dbReference>
<dbReference type="Gene3D" id="2.80.10.50">
    <property type="match status" value="1"/>
</dbReference>
<dbReference type="InterPro" id="IPR020877">
    <property type="entry name" value="IL-1_CS"/>
</dbReference>
<dbReference type="InterPro" id="IPR000975">
    <property type="entry name" value="IL-1_fam"/>
</dbReference>
<dbReference type="InterPro" id="IPR003297">
    <property type="entry name" value="IL-1RA/IL-36"/>
</dbReference>
<dbReference type="InterPro" id="IPR008996">
    <property type="entry name" value="IL1/FGF"/>
</dbReference>
<dbReference type="PANTHER" id="PTHR10078">
    <property type="entry name" value="INTERLEUKIN-1 FAMILY MEMBER"/>
    <property type="match status" value="1"/>
</dbReference>
<dbReference type="PANTHER" id="PTHR10078:SF28">
    <property type="entry name" value="INTERLEUKIN-1 RECEPTOR ANTAGONIST PROTEIN"/>
    <property type="match status" value="1"/>
</dbReference>
<dbReference type="Pfam" id="PF00340">
    <property type="entry name" value="IL1"/>
    <property type="match status" value="1"/>
</dbReference>
<dbReference type="PRINTS" id="PR00264">
    <property type="entry name" value="INTERLEUKIN1"/>
</dbReference>
<dbReference type="PRINTS" id="PR01360">
    <property type="entry name" value="INTRLEUKIN1X"/>
</dbReference>
<dbReference type="SMART" id="SM00125">
    <property type="entry name" value="IL1"/>
    <property type="match status" value="1"/>
</dbReference>
<dbReference type="SUPFAM" id="SSF50353">
    <property type="entry name" value="Cytokine"/>
    <property type="match status" value="1"/>
</dbReference>
<dbReference type="PROSITE" id="PS00253">
    <property type="entry name" value="INTERLEUKIN_1"/>
    <property type="match status" value="1"/>
</dbReference>
<organism>
    <name type="scientific">Equus caballus</name>
    <name type="common">Horse</name>
    <dbReference type="NCBI Taxonomy" id="9796"/>
    <lineage>
        <taxon>Eukaryota</taxon>
        <taxon>Metazoa</taxon>
        <taxon>Chordata</taxon>
        <taxon>Craniata</taxon>
        <taxon>Vertebrata</taxon>
        <taxon>Euteleostomi</taxon>
        <taxon>Mammalia</taxon>
        <taxon>Eutheria</taxon>
        <taxon>Laurasiatheria</taxon>
        <taxon>Perissodactyla</taxon>
        <taxon>Equidae</taxon>
        <taxon>Equus</taxon>
    </lineage>
</organism>
<feature type="signal peptide" evidence="1">
    <location>
        <begin position="1"/>
        <end position="25"/>
    </location>
</feature>
<feature type="chain" id="PRO_0000015327" description="Interleukin-1 receptor antagonist protein">
    <location>
        <begin position="26"/>
        <end position="177"/>
    </location>
</feature>
<feature type="glycosylation site" description="N-linked (GlcNAc...) asparagine" evidence="4">
    <location>
        <position position="109"/>
    </location>
</feature>
<feature type="disulfide bond" evidence="1">
    <location>
        <begin position="91"/>
        <end position="141"/>
    </location>
</feature>
<feature type="sequence conflict" description="In Ref. 2; AAC39257." evidence="5" ref="2">
    <original>F</original>
    <variation>L</variation>
    <location>
        <position position="19"/>
    </location>
</feature>
<feature type="sequence conflict" description="In Ref. 3; AAD04132." evidence="5" ref="3">
    <location>
        <position position="66"/>
    </location>
</feature>